<protein>
    <recommendedName>
        <fullName evidence="1">Pyrophosphate--fructose 6-phosphate 1-phosphotransferase</fullName>
        <ecNumber evidence="1">2.7.1.90</ecNumber>
    </recommendedName>
    <alternativeName>
        <fullName evidence="1">6-phosphofructokinase, pyrophosphate dependent</fullName>
    </alternativeName>
    <alternativeName>
        <fullName evidence="1">PPi-dependent phosphofructokinase</fullName>
        <shortName evidence="1">PPi-PFK</shortName>
    </alternativeName>
    <alternativeName>
        <fullName evidence="1">Pyrophosphate-dependent 6-phosphofructose-1-kinase</fullName>
    </alternativeName>
</protein>
<reference key="1">
    <citation type="journal article" date="2008" name="J. Biotechnol.">
        <title>The genome of Xanthomonas campestris pv. campestris B100 and its use for the reconstruction of metabolic pathways involved in xanthan biosynthesis.</title>
        <authorList>
            <person name="Vorhoelter F.-J."/>
            <person name="Schneiker S."/>
            <person name="Goesmann A."/>
            <person name="Krause L."/>
            <person name="Bekel T."/>
            <person name="Kaiser O."/>
            <person name="Linke B."/>
            <person name="Patschkowski T."/>
            <person name="Rueckert C."/>
            <person name="Schmid J."/>
            <person name="Sidhu V.K."/>
            <person name="Sieber V."/>
            <person name="Tauch A."/>
            <person name="Watt S.A."/>
            <person name="Weisshaar B."/>
            <person name="Becker A."/>
            <person name="Niehaus K."/>
            <person name="Puehler A."/>
        </authorList>
    </citation>
    <scope>NUCLEOTIDE SEQUENCE [LARGE SCALE GENOMIC DNA]</scope>
    <source>
        <strain>B100</strain>
    </source>
</reference>
<reference key="2">
    <citation type="journal article" date="2014" name="Arch. Biochem. Biophys.">
        <title>Characterization of the pyrophosphate-dependent 6-phosphofructokinase from Xanthomonas campestris pv. campestris.</title>
        <authorList>
            <person name="Frese M."/>
            <person name="Schatschneider S."/>
            <person name="Voss J."/>
            <person name="Vorholter F.J."/>
            <person name="Niehaus K."/>
        </authorList>
    </citation>
    <scope>FUNCTION</scope>
    <scope>CATALYTIC ACTIVITY</scope>
    <scope>BIOPHYSICOCHEMICAL PROPERTIES</scope>
    <scope>ACTIVITY REGULATION</scope>
    <source>
        <strain>B100</strain>
    </source>
</reference>
<sequence length="418" mass="44647">MTNGNLLYAQSGGVTAVINATAAGVIGEARARKIKVLAARNGILGALREELIDTSKESAAAIAALAQTPGGAFGSCRYKLKSLEQDRAKYERLLEVLRAHDVRWFLYNGGNDSADTALKVSQLAKAFGYPLHCIGVPKTIDNDLAVTDTCPGFGSAAKYTAVSVREAALDVAAMADTSTKVFIYEAMGRHAGWLAAAAGLAGQGPDDAPQIILLPERAFDQAAFLAKVRQMVERVGWCVVVASEGIQDAQGKFVADAGGATDSFGHAQLGGVASFLAAQVKQELGYKVHWTLPDYLQRSARHLASKTDWEQAQAVGKAAVQYALKGMNAVIPVIERVSDAPYRWKIVPAPLHKVANHEKKMPPSFLRKDGFGITERARRYFAPLIKGEAPLAYGSDGLPKYVSLKNVAVAKKLPAWEG</sequence>
<proteinExistence type="evidence at protein level"/>
<evidence type="ECO:0000255" key="1">
    <source>
        <dbReference type="HAMAP-Rule" id="MF_01978"/>
    </source>
</evidence>
<evidence type="ECO:0000269" key="2">
    <source>
    </source>
</evidence>
<dbReference type="EC" id="2.7.1.90" evidence="1"/>
<dbReference type="EMBL" id="AM920689">
    <property type="protein sequence ID" value="CAP50236.1"/>
    <property type="molecule type" value="Genomic_DNA"/>
</dbReference>
<dbReference type="SMR" id="B0RP51"/>
<dbReference type="KEGG" id="xca:xcc-b100_0891"/>
<dbReference type="HOGENOM" id="CLU_020655_1_1_6"/>
<dbReference type="BRENDA" id="2.7.1.90">
    <property type="organism ID" value="9230"/>
</dbReference>
<dbReference type="UniPathway" id="UPA00109">
    <property type="reaction ID" value="UER00182"/>
</dbReference>
<dbReference type="Proteomes" id="UP000001188">
    <property type="component" value="Chromosome"/>
</dbReference>
<dbReference type="GO" id="GO:0005737">
    <property type="term" value="C:cytoplasm"/>
    <property type="evidence" value="ECO:0007669"/>
    <property type="project" value="UniProtKB-SubCell"/>
</dbReference>
<dbReference type="GO" id="GO:0003872">
    <property type="term" value="F:6-phosphofructokinase activity"/>
    <property type="evidence" value="ECO:0007669"/>
    <property type="project" value="UniProtKB-UniRule"/>
</dbReference>
<dbReference type="GO" id="GO:0047334">
    <property type="term" value="F:diphosphate-fructose-6-phosphate 1-phosphotransferase activity"/>
    <property type="evidence" value="ECO:0007669"/>
    <property type="project" value="UniProtKB-EC"/>
</dbReference>
<dbReference type="GO" id="GO:0046872">
    <property type="term" value="F:metal ion binding"/>
    <property type="evidence" value="ECO:0007669"/>
    <property type="project" value="UniProtKB-KW"/>
</dbReference>
<dbReference type="GO" id="GO:0006002">
    <property type="term" value="P:fructose 6-phosphate metabolic process"/>
    <property type="evidence" value="ECO:0007669"/>
    <property type="project" value="InterPro"/>
</dbReference>
<dbReference type="Gene3D" id="3.40.50.450">
    <property type="match status" value="1"/>
</dbReference>
<dbReference type="Gene3D" id="3.40.50.460">
    <property type="entry name" value="Phosphofructokinase domain"/>
    <property type="match status" value="1"/>
</dbReference>
<dbReference type="HAMAP" id="MF_01978">
    <property type="entry name" value="Phosphofructokinase_II_B2"/>
    <property type="match status" value="1"/>
</dbReference>
<dbReference type="InterPro" id="IPR022953">
    <property type="entry name" value="ATP_PFK"/>
</dbReference>
<dbReference type="InterPro" id="IPR050929">
    <property type="entry name" value="PFKA"/>
</dbReference>
<dbReference type="InterPro" id="IPR000023">
    <property type="entry name" value="Phosphofructokinase_dom"/>
</dbReference>
<dbReference type="InterPro" id="IPR035966">
    <property type="entry name" value="PKF_sf"/>
</dbReference>
<dbReference type="InterPro" id="IPR011404">
    <property type="entry name" value="PPi-PFK"/>
</dbReference>
<dbReference type="NCBIfam" id="NF010675">
    <property type="entry name" value="PRK14072.1"/>
    <property type="match status" value="1"/>
</dbReference>
<dbReference type="PANTHER" id="PTHR45770">
    <property type="entry name" value="ATP-DEPENDENT 6-PHOSPHOFRUCTOKINASE 1"/>
    <property type="match status" value="1"/>
</dbReference>
<dbReference type="Pfam" id="PF00365">
    <property type="entry name" value="PFK"/>
    <property type="match status" value="1"/>
</dbReference>
<dbReference type="PIRSF" id="PIRSF036483">
    <property type="entry name" value="PFK_XF0274"/>
    <property type="match status" value="1"/>
</dbReference>
<dbReference type="PRINTS" id="PR00476">
    <property type="entry name" value="PHFRCTKINASE"/>
</dbReference>
<dbReference type="SUPFAM" id="SSF53784">
    <property type="entry name" value="Phosphofructokinase"/>
    <property type="match status" value="1"/>
</dbReference>
<organism>
    <name type="scientific">Xanthomonas campestris pv. campestris (strain B100)</name>
    <dbReference type="NCBI Taxonomy" id="509169"/>
    <lineage>
        <taxon>Bacteria</taxon>
        <taxon>Pseudomonadati</taxon>
        <taxon>Pseudomonadota</taxon>
        <taxon>Gammaproteobacteria</taxon>
        <taxon>Lysobacterales</taxon>
        <taxon>Lysobacteraceae</taxon>
        <taxon>Xanthomonas</taxon>
    </lineage>
</organism>
<keyword id="KW-0963">Cytoplasm</keyword>
<keyword id="KW-0324">Glycolysis</keyword>
<keyword id="KW-0418">Kinase</keyword>
<keyword id="KW-0460">Magnesium</keyword>
<keyword id="KW-0479">Metal-binding</keyword>
<keyword id="KW-0808">Transferase</keyword>
<feature type="chain" id="PRO_0000429699" description="Pyrophosphate--fructose 6-phosphate 1-phosphotransferase">
    <location>
        <begin position="1"/>
        <end position="418"/>
    </location>
</feature>
<feature type="active site" description="Proton acceptor" evidence="1">
    <location>
        <position position="141"/>
    </location>
</feature>
<feature type="binding site" evidence="1">
    <location>
        <position position="13"/>
    </location>
    <ligand>
        <name>diphosphate</name>
        <dbReference type="ChEBI" id="CHEBI:33019"/>
    </ligand>
</feature>
<feature type="binding site" evidence="1">
    <location>
        <position position="111"/>
    </location>
    <ligand>
        <name>Mg(2+)</name>
        <dbReference type="ChEBI" id="CHEBI:18420"/>
        <note>catalytic</note>
    </ligand>
</feature>
<feature type="binding site" evidence="1">
    <location>
        <begin position="139"/>
        <end position="141"/>
    </location>
    <ligand>
        <name>substrate</name>
    </ligand>
</feature>
<feature type="binding site" evidence="1">
    <location>
        <begin position="187"/>
        <end position="189"/>
    </location>
    <ligand>
        <name>substrate</name>
    </ligand>
</feature>
<feature type="binding site" evidence="1">
    <location>
        <position position="244"/>
    </location>
    <ligand>
        <name>substrate</name>
    </ligand>
</feature>
<feature type="binding site" evidence="1">
    <location>
        <begin position="295"/>
        <end position="298"/>
    </location>
    <ligand>
        <name>substrate</name>
    </ligand>
</feature>
<feature type="site" description="Important for catalytic activity and substrate specificity; stabilizes the transition state when the phosphoryl donor is PPi; prevents ATP from binding by mimicking the alpha-phosphate group of ATP" evidence="1">
    <location>
        <position position="112"/>
    </location>
</feature>
<feature type="site" description="Important for catalytic activity; stabilizes the transition state when the phosphoryl donor is PPi" evidence="1">
    <location>
        <position position="138"/>
    </location>
</feature>
<name>PFP_XANCB</name>
<gene>
    <name evidence="1" type="primary">pfp</name>
    <name type="ordered locus">xcc-b100_0891</name>
</gene>
<comment type="function">
    <text evidence="1 2">Catalyzes the phosphorylation of D-fructose 6-phosphate, the first committing step of glycolysis. Uses inorganic phosphate (PPi) as phosphoryl donor instead of ATP like common ATP-dependent phosphofructokinases (ATP-PFKs), which renders the reaction reversible, and can thus function both in glycolysis and gluconeogenesis. Consistently, PPi-PFK can replace the enzymes of both the forward (ATP-PFK) and reverse (fructose-bisphosphatase (FBPase)) reactions.</text>
</comment>
<comment type="catalytic activity">
    <reaction evidence="1 2">
        <text>beta-D-fructose 6-phosphate + diphosphate = beta-D-fructose 1,6-bisphosphate + phosphate + H(+)</text>
        <dbReference type="Rhea" id="RHEA:13613"/>
        <dbReference type="ChEBI" id="CHEBI:15378"/>
        <dbReference type="ChEBI" id="CHEBI:32966"/>
        <dbReference type="ChEBI" id="CHEBI:33019"/>
        <dbReference type="ChEBI" id="CHEBI:43474"/>
        <dbReference type="ChEBI" id="CHEBI:57634"/>
        <dbReference type="EC" id="2.7.1.90"/>
    </reaction>
</comment>
<comment type="cofactor">
    <cofactor evidence="1">
        <name>Mg(2+)</name>
        <dbReference type="ChEBI" id="CHEBI:18420"/>
    </cofactor>
</comment>
<comment type="activity regulation">
    <text evidence="1 2">Non-allosteric.</text>
</comment>
<comment type="biophysicochemical properties">
    <kinetics>
        <KM evidence="2">2.5 mM for phosphate</KM>
        <KM evidence="2">41 uM for diphosphate</KM>
        <KM evidence="2">202 uM for fructose 6-phosphate</KM>
        <KM evidence="2">24 uM for fructose 1,6-bisphosphate</KM>
        <Vmax evidence="2">58.0 umol/min/mg enzyme for the forward reaction</Vmax>
        <Vmax evidence="2">59.0 umol/min/mg enzyme for the reverse reaction</Vmax>
    </kinetics>
    <phDependence>
        <text evidence="2">Optimum pH is 6.8.</text>
    </phDependence>
    <temperatureDependence>
        <text evidence="2">Optimum temperature is 40 degrees Celsius.</text>
    </temperatureDependence>
</comment>
<comment type="pathway">
    <text evidence="1">Carbohydrate degradation; glycolysis; D-glyceraldehyde 3-phosphate and glycerone phosphate from D-glucose: step 3/4.</text>
</comment>
<comment type="subunit">
    <text evidence="1">Homodimer.</text>
</comment>
<comment type="subcellular location">
    <subcellularLocation>
        <location evidence="1">Cytoplasm</location>
    </subcellularLocation>
</comment>
<comment type="similarity">
    <text evidence="1">Belongs to the phosphofructokinase type A (PFKA) family. PPi-dependent PFK group II subfamily. Clade 'B2' sub-subfamily.</text>
</comment>
<accession>B0RP51</accession>